<keyword id="KW-0002">3D-structure</keyword>
<keyword id="KW-0963">Cytoplasm</keyword>
<keyword id="KW-1185">Reference proteome</keyword>
<keyword id="KW-0808">Transferase</keyword>
<feature type="chain" id="PRO_0000315845" description="Cytosolic sulfotransferase 16">
    <location>
        <begin position="1"/>
        <end position="338"/>
    </location>
</feature>
<feature type="active site" description="Proton acceptor" evidence="1">
    <location>
        <position position="143"/>
    </location>
</feature>
<feature type="binding site" evidence="1">
    <location>
        <begin position="81"/>
        <end position="86"/>
    </location>
    <ligand>
        <name>3'-phosphoadenylyl sulfate</name>
        <dbReference type="ChEBI" id="CHEBI:58339"/>
    </ligand>
</feature>
<feature type="binding site" evidence="1">
    <location>
        <position position="165"/>
    </location>
    <ligand>
        <name>3'-phosphoadenylyl sulfate</name>
        <dbReference type="ChEBI" id="CHEBI:58339"/>
    </ligand>
</feature>
<feature type="binding site" evidence="1">
    <location>
        <position position="173"/>
    </location>
    <ligand>
        <name>3'-phosphoadenylyl sulfate</name>
        <dbReference type="ChEBI" id="CHEBI:58339"/>
    </ligand>
</feature>
<feature type="binding site" evidence="1">
    <location>
        <position position="231"/>
    </location>
    <ligand>
        <name>3'-phosphoadenylyl sulfate</name>
        <dbReference type="ChEBI" id="CHEBI:58339"/>
    </ligand>
</feature>
<feature type="binding site" evidence="1">
    <location>
        <begin position="301"/>
        <end position="303"/>
    </location>
    <ligand>
        <name>3'-phosphoadenylyl sulfate</name>
        <dbReference type="ChEBI" id="CHEBI:58339"/>
    </ligand>
</feature>
<feature type="sequence variant" description="In strain: cv. C24." evidence="4">
    <original>V</original>
    <variation>L</variation>
    <location>
        <position position="324"/>
    </location>
</feature>
<dbReference type="EC" id="2.8.2.24" evidence="5"/>
<dbReference type="EMBL" id="AC016662">
    <property type="protein sequence ID" value="AAG52512.1"/>
    <property type="molecule type" value="Genomic_DNA"/>
</dbReference>
<dbReference type="EMBL" id="CP002684">
    <property type="protein sequence ID" value="AEE35550.1"/>
    <property type="molecule type" value="Genomic_DNA"/>
</dbReference>
<dbReference type="EMBL" id="AY042887">
    <property type="protein sequence ID" value="AAK68827.1"/>
    <property type="molecule type" value="mRNA"/>
</dbReference>
<dbReference type="EMBL" id="AY081540">
    <property type="protein sequence ID" value="AAM10102.1"/>
    <property type="molecule type" value="mRNA"/>
</dbReference>
<dbReference type="EMBL" id="AY087493">
    <property type="protein sequence ID" value="AAM65036.1"/>
    <property type="molecule type" value="mRNA"/>
</dbReference>
<dbReference type="PIR" id="A96769">
    <property type="entry name" value="A96769"/>
</dbReference>
<dbReference type="RefSeq" id="NP_177550.1">
    <property type="nucleotide sequence ID" value="NM_106070.2"/>
</dbReference>
<dbReference type="PDB" id="8K9Y">
    <property type="method" value="X-ray"/>
    <property type="resolution" value="1.82 A"/>
    <property type="chains" value="A/B=16-338"/>
</dbReference>
<dbReference type="PDBsum" id="8K9Y"/>
<dbReference type="SMR" id="Q9C9D0"/>
<dbReference type="FunCoup" id="Q9C9D0">
    <property type="interactions" value="150"/>
</dbReference>
<dbReference type="STRING" id="3702.Q9C9D0"/>
<dbReference type="PaxDb" id="3702-AT1G74100.1"/>
<dbReference type="ProteomicsDB" id="232611"/>
<dbReference type="EnsemblPlants" id="AT1G74100.1">
    <property type="protein sequence ID" value="AT1G74100.1"/>
    <property type="gene ID" value="AT1G74100"/>
</dbReference>
<dbReference type="GeneID" id="843750"/>
<dbReference type="Gramene" id="AT1G74100.1">
    <property type="protein sequence ID" value="AT1G74100.1"/>
    <property type="gene ID" value="AT1G74100"/>
</dbReference>
<dbReference type="KEGG" id="ath:AT1G74100"/>
<dbReference type="Araport" id="AT1G74100"/>
<dbReference type="TAIR" id="AT1G74100">
    <property type="gene designation" value="SOT16"/>
</dbReference>
<dbReference type="eggNOG" id="KOG1584">
    <property type="taxonomic scope" value="Eukaryota"/>
</dbReference>
<dbReference type="HOGENOM" id="CLU_027239_0_3_1"/>
<dbReference type="InParanoid" id="Q9C9D0"/>
<dbReference type="OMA" id="DPYEKNI"/>
<dbReference type="PhylomeDB" id="Q9C9D0"/>
<dbReference type="BioCyc" id="MetaCyc:AT1G74100-MONOMER"/>
<dbReference type="BRENDA" id="2.8.2.24">
    <property type="organism ID" value="399"/>
</dbReference>
<dbReference type="BRENDA" id="2.8.2.38">
    <property type="organism ID" value="399"/>
</dbReference>
<dbReference type="PRO" id="PR:Q9C9D0"/>
<dbReference type="Proteomes" id="UP000006548">
    <property type="component" value="Chromosome 1"/>
</dbReference>
<dbReference type="ExpressionAtlas" id="Q9C9D0">
    <property type="expression patterns" value="baseline and differential"/>
</dbReference>
<dbReference type="GO" id="GO:0005739">
    <property type="term" value="C:mitochondrion"/>
    <property type="evidence" value="ECO:0007005"/>
    <property type="project" value="TAIR"/>
</dbReference>
<dbReference type="GO" id="GO:0047364">
    <property type="term" value="F:aromatic desulfoglucosinolate sulfotransferase activity"/>
    <property type="evidence" value="ECO:0000314"/>
    <property type="project" value="TAIR"/>
</dbReference>
<dbReference type="GO" id="GO:0019761">
    <property type="term" value="P:glucosinolate biosynthetic process"/>
    <property type="evidence" value="ECO:0000314"/>
    <property type="project" value="TAIR"/>
</dbReference>
<dbReference type="GO" id="GO:0032260">
    <property type="term" value="P:response to jasmonic acid stimulus involved in jasmonic acid and ethylene-dependent systemic resistance"/>
    <property type="evidence" value="ECO:0000270"/>
    <property type="project" value="TAIR"/>
</dbReference>
<dbReference type="FunFam" id="3.40.50.300:FF:001258">
    <property type="entry name" value="Sulfotransferase"/>
    <property type="match status" value="1"/>
</dbReference>
<dbReference type="Gene3D" id="3.40.50.300">
    <property type="entry name" value="P-loop containing nucleotide triphosphate hydrolases"/>
    <property type="match status" value="1"/>
</dbReference>
<dbReference type="InterPro" id="IPR027417">
    <property type="entry name" value="P-loop_NTPase"/>
</dbReference>
<dbReference type="InterPro" id="IPR000863">
    <property type="entry name" value="Sulfotransferase_dom"/>
</dbReference>
<dbReference type="PANTHER" id="PTHR11783">
    <property type="entry name" value="SULFOTRANSFERASE SULT"/>
    <property type="match status" value="1"/>
</dbReference>
<dbReference type="Pfam" id="PF00685">
    <property type="entry name" value="Sulfotransfer_1"/>
    <property type="match status" value="1"/>
</dbReference>
<dbReference type="SUPFAM" id="SSF52540">
    <property type="entry name" value="P-loop containing nucleoside triphosphate hydrolases"/>
    <property type="match status" value="1"/>
</dbReference>
<protein>
    <recommendedName>
        <fullName>Cytosolic sulfotransferase 16</fullName>
        <shortName>AtSOT16</shortName>
        <ecNumber evidence="5">2.8.2.24</ecNumber>
    </recommendedName>
    <alternativeName>
        <fullName evidence="7">Aromatic desulfoglucosinolate sulfotransferase</fullName>
    </alternativeName>
    <alternativeName>
        <fullName>Desulfoglucosinolate sulfotransferase A</fullName>
        <shortName>AtST5a</shortName>
    </alternativeName>
    <alternativeName>
        <fullName>Protein CORONATINE INDUCED 7</fullName>
    </alternativeName>
</protein>
<gene>
    <name type="primary">SOT16</name>
    <name type="synonym">CORI-7</name>
    <name type="synonym">ST5A</name>
    <name type="ordered locus">At1g74100</name>
    <name type="ORF">F2P9.3</name>
</gene>
<name>SOT16_ARATH</name>
<sequence length="338" mass="39219">MESKTTQNGSEVVELTEFEKTQKKYQDFIATLPKSKGWRPDEILTQYGGHWWQECLLEGLFHAKDHFEARPTDFLVCSYPKTGTTWLKALTYAIVNRSRYDDAANPLLKRNPHEFVPYVEIDFAFYPTVDVLQDRKNPLFSTHIPNGLLPDSIVNSGCKMVYIWRDPKDTFISMWTFLHKEKSQEGQLASLEDSFDMFCKGLSVYGPYLDHVLGYWKAYQENPDRILFLRYETMRANPLPFVKRLAEFMGYGFTDEEEENGVAEKVVKLCSFETLKNLEANKGDKEREDRPAVYANSAYFRKGKVGDWANYLTPEMAARIDGLVEEKFKDTGLLQHDN</sequence>
<evidence type="ECO:0000250" key="1"/>
<evidence type="ECO:0000269" key="2">
    <source>
    </source>
</evidence>
<evidence type="ECO:0000269" key="3">
    <source>
    </source>
</evidence>
<evidence type="ECO:0000269" key="4">
    <source>
    </source>
</evidence>
<evidence type="ECO:0000269" key="5">
    <source>
    </source>
</evidence>
<evidence type="ECO:0000269" key="6">
    <source>
    </source>
</evidence>
<evidence type="ECO:0000305" key="7"/>
<accession>Q9C9D0</accession>
<accession>Q8LB09</accession>
<proteinExistence type="evidence at protein level"/>
<comment type="function">
    <text evidence="2 3 4 5 6">Sulfotransferase that utilizes 3'-phospho-5'-adenylyl sulfate (PAPS) as sulfonate donor to catalyze the sulfate conjugation of desulfo-glucosinolates (dsGSs), the final step in the biosynthesis of the glucosinolate core structure. Substrate preference is desulfo-2-phenylethyl glucosinolate &gt; desulfo-indol-3-yl methyl glucosinolate &gt; desulfo-benzyl glucosinolate &gt; desulfo-6-methylthiohexyl glucosinolate &gt; desulfo-4-methylthiobutyl glucosinolate &gt; desulfo-3-methylthiopropyl glucosinolate &gt; desulfo-singrin &gt; desulfo-3-butenyl glucosinolate.</text>
</comment>
<comment type="catalytic activity">
    <reaction evidence="5">
        <text>(Z)-desulfoglucotropeolin + 3'-phosphoadenylyl sulfate = (Z)-glucotropeolin + adenosine 3',5'-bisphosphate + H(+)</text>
        <dbReference type="Rhea" id="RHEA:20281"/>
        <dbReference type="ChEBI" id="CHEBI:15378"/>
        <dbReference type="ChEBI" id="CHEBI:58021"/>
        <dbReference type="ChEBI" id="CHEBI:58339"/>
        <dbReference type="ChEBI" id="CHEBI:58343"/>
        <dbReference type="ChEBI" id="CHEBI:136422"/>
        <dbReference type="EC" id="2.8.2.24"/>
    </reaction>
</comment>
<comment type="catalytic activity">
    <reaction evidence="5">
        <text>(Z)-indolylmethyl desulfoglucosinolate + 3'-phosphoadenylyl sulfate = (Z)-glucobrassicin + adenosine 3',5'-bisphosphate + H(+)</text>
        <dbReference type="Rhea" id="RHEA:52736"/>
        <dbReference type="ChEBI" id="CHEBI:15378"/>
        <dbReference type="ChEBI" id="CHEBI:58339"/>
        <dbReference type="ChEBI" id="CHEBI:58343"/>
        <dbReference type="ChEBI" id="CHEBI:136527"/>
        <dbReference type="ChEBI" id="CHEBI:187898"/>
        <dbReference type="EC" id="2.8.2.24"/>
    </reaction>
</comment>
<comment type="activity regulation">
    <text>Inhibited by phosphoadenosine 5'-phosphate (PAP).</text>
</comment>
<comment type="biophysicochemical properties">
    <kinetics>
        <KM evidence="4 5">100 uM for desulfo-benzyl glucosinolate</KM>
        <KM evidence="4 5">100 uM for 3'-phospho-5'-adenylyl sulfate</KM>
        <KM evidence="4 5">70 uM for desulfo-3-methylthiopropyl glucosinolate</KM>
        <KM evidence="4 5">80 uM for desulfo-4-methylthiobutyl glucosinolate</KM>
        <Vmax evidence="4 5">1100.0 pmol/sec/mg enzyme with desulfo-benzyl glucosinolate as substrate</Vmax>
        <Vmax evidence="4 5">692.0 pmol/sec/mg enzyme with 3'-phospho-5'-adenylyl sulfate as substrate</Vmax>
        <Vmax evidence="4 5">623.0 pmol/sec/mg enzyme with desulfo-3-methylthiopropyl glucosinolate as substrate</Vmax>
        <Vmax evidence="4 5">496.0 pmol/sec/mg enzyme with desulfo-4-methylthiobutyl glucosinolate as substrate</Vmax>
    </kinetics>
    <phDependence>
        <text evidence="4 5">Optimum pH is 9.0.</text>
    </phDependence>
</comment>
<comment type="subcellular location">
    <subcellularLocation>
        <location evidence="4">Cytoplasm</location>
    </subcellularLocation>
</comment>
<comment type="tissue specificity">
    <text evidence="4">Highly expressed in roots, stems and mature leaves. Low expression in young leaves and flowers. Barely detected in siliques.</text>
</comment>
<comment type="developmental stage">
    <text evidence="4">Expression reaching a maximum in 2-week-old plants and a minimum in flowering plants.</text>
</comment>
<comment type="induction">
    <text evidence="2 4">By wounding, 12-oxophytodienoic acid, jasmonic acid, ethylene, UV-C and coronatine treatments. Not induced by abscisic acid, 2,4-dichlorophenoxyacetic acid, gibberellin, kinetin, salicylic acid, yeast elicitor or high sulfate concentration.</text>
</comment>
<comment type="similarity">
    <text evidence="7">Belongs to the sulfotransferase 1 family.</text>
</comment>
<reference key="1">
    <citation type="journal article" date="2000" name="Nature">
        <title>Sequence and analysis of chromosome 1 of the plant Arabidopsis thaliana.</title>
        <authorList>
            <person name="Theologis A."/>
            <person name="Ecker J.R."/>
            <person name="Palm C.J."/>
            <person name="Federspiel N.A."/>
            <person name="Kaul S."/>
            <person name="White O."/>
            <person name="Alonso J."/>
            <person name="Altafi H."/>
            <person name="Araujo R."/>
            <person name="Bowman C.L."/>
            <person name="Brooks S.Y."/>
            <person name="Buehler E."/>
            <person name="Chan A."/>
            <person name="Chao Q."/>
            <person name="Chen H."/>
            <person name="Cheuk R.F."/>
            <person name="Chin C.W."/>
            <person name="Chung M.K."/>
            <person name="Conn L."/>
            <person name="Conway A.B."/>
            <person name="Conway A.R."/>
            <person name="Creasy T.H."/>
            <person name="Dewar K."/>
            <person name="Dunn P."/>
            <person name="Etgu P."/>
            <person name="Feldblyum T.V."/>
            <person name="Feng J.-D."/>
            <person name="Fong B."/>
            <person name="Fujii C.Y."/>
            <person name="Gill J.E."/>
            <person name="Goldsmith A.D."/>
            <person name="Haas B."/>
            <person name="Hansen N.F."/>
            <person name="Hughes B."/>
            <person name="Huizar L."/>
            <person name="Hunter J.L."/>
            <person name="Jenkins J."/>
            <person name="Johnson-Hopson C."/>
            <person name="Khan S."/>
            <person name="Khaykin E."/>
            <person name="Kim C.J."/>
            <person name="Koo H.L."/>
            <person name="Kremenetskaia I."/>
            <person name="Kurtz D.B."/>
            <person name="Kwan A."/>
            <person name="Lam B."/>
            <person name="Langin-Hooper S."/>
            <person name="Lee A."/>
            <person name="Lee J.M."/>
            <person name="Lenz C.A."/>
            <person name="Li J.H."/>
            <person name="Li Y.-P."/>
            <person name="Lin X."/>
            <person name="Liu S.X."/>
            <person name="Liu Z.A."/>
            <person name="Luros J.S."/>
            <person name="Maiti R."/>
            <person name="Marziali A."/>
            <person name="Militscher J."/>
            <person name="Miranda M."/>
            <person name="Nguyen M."/>
            <person name="Nierman W.C."/>
            <person name="Osborne B.I."/>
            <person name="Pai G."/>
            <person name="Peterson J."/>
            <person name="Pham P.K."/>
            <person name="Rizzo M."/>
            <person name="Rooney T."/>
            <person name="Rowley D."/>
            <person name="Sakano H."/>
            <person name="Salzberg S.L."/>
            <person name="Schwartz J.R."/>
            <person name="Shinn P."/>
            <person name="Southwick A.M."/>
            <person name="Sun H."/>
            <person name="Tallon L.J."/>
            <person name="Tambunga G."/>
            <person name="Toriumi M.J."/>
            <person name="Town C.D."/>
            <person name="Utterback T."/>
            <person name="Van Aken S."/>
            <person name="Vaysberg M."/>
            <person name="Vysotskaia V.S."/>
            <person name="Walker M."/>
            <person name="Wu D."/>
            <person name="Yu G."/>
            <person name="Fraser C.M."/>
            <person name="Venter J.C."/>
            <person name="Davis R.W."/>
        </authorList>
    </citation>
    <scope>NUCLEOTIDE SEQUENCE [LARGE SCALE GENOMIC DNA]</scope>
    <source>
        <strain>cv. Columbia</strain>
    </source>
</reference>
<reference key="2">
    <citation type="journal article" date="2017" name="Plant J.">
        <title>Araport11: a complete reannotation of the Arabidopsis thaliana reference genome.</title>
        <authorList>
            <person name="Cheng C.Y."/>
            <person name="Krishnakumar V."/>
            <person name="Chan A.P."/>
            <person name="Thibaud-Nissen F."/>
            <person name="Schobel S."/>
            <person name="Town C.D."/>
        </authorList>
    </citation>
    <scope>GENOME REANNOTATION</scope>
    <source>
        <strain>cv. Columbia</strain>
    </source>
</reference>
<reference key="3">
    <citation type="journal article" date="2003" name="Science">
        <title>Empirical analysis of transcriptional activity in the Arabidopsis genome.</title>
        <authorList>
            <person name="Yamada K."/>
            <person name="Lim J."/>
            <person name="Dale J.M."/>
            <person name="Chen H."/>
            <person name="Shinn P."/>
            <person name="Palm C.J."/>
            <person name="Southwick A.M."/>
            <person name="Wu H.C."/>
            <person name="Kim C.J."/>
            <person name="Nguyen M."/>
            <person name="Pham P.K."/>
            <person name="Cheuk R.F."/>
            <person name="Karlin-Newmann G."/>
            <person name="Liu S.X."/>
            <person name="Lam B."/>
            <person name="Sakano H."/>
            <person name="Wu T."/>
            <person name="Yu G."/>
            <person name="Miranda M."/>
            <person name="Quach H.L."/>
            <person name="Tripp M."/>
            <person name="Chang C.H."/>
            <person name="Lee J.M."/>
            <person name="Toriumi M.J."/>
            <person name="Chan M.M."/>
            <person name="Tang C.C."/>
            <person name="Onodera C.S."/>
            <person name="Deng J.M."/>
            <person name="Akiyama K."/>
            <person name="Ansari Y."/>
            <person name="Arakawa T."/>
            <person name="Banh J."/>
            <person name="Banno F."/>
            <person name="Bowser L."/>
            <person name="Brooks S.Y."/>
            <person name="Carninci P."/>
            <person name="Chao Q."/>
            <person name="Choy N."/>
            <person name="Enju A."/>
            <person name="Goldsmith A.D."/>
            <person name="Gurjal M."/>
            <person name="Hansen N.F."/>
            <person name="Hayashizaki Y."/>
            <person name="Johnson-Hopson C."/>
            <person name="Hsuan V.W."/>
            <person name="Iida K."/>
            <person name="Karnes M."/>
            <person name="Khan S."/>
            <person name="Koesema E."/>
            <person name="Ishida J."/>
            <person name="Jiang P.X."/>
            <person name="Jones T."/>
            <person name="Kawai J."/>
            <person name="Kamiya A."/>
            <person name="Meyers C."/>
            <person name="Nakajima M."/>
            <person name="Narusaka M."/>
            <person name="Seki M."/>
            <person name="Sakurai T."/>
            <person name="Satou M."/>
            <person name="Tamse R."/>
            <person name="Vaysberg M."/>
            <person name="Wallender E.K."/>
            <person name="Wong C."/>
            <person name="Yamamura Y."/>
            <person name="Yuan S."/>
            <person name="Shinozaki K."/>
            <person name="Davis R.W."/>
            <person name="Theologis A."/>
            <person name="Ecker J.R."/>
        </authorList>
    </citation>
    <scope>NUCLEOTIDE SEQUENCE [LARGE SCALE MRNA]</scope>
    <source>
        <strain>cv. Columbia</strain>
    </source>
</reference>
<reference key="4">
    <citation type="submission" date="2002-03" db="EMBL/GenBank/DDBJ databases">
        <title>Full-length cDNA from Arabidopsis thaliana.</title>
        <authorList>
            <person name="Brover V.V."/>
            <person name="Troukhan M.E."/>
            <person name="Alexandrov N.A."/>
            <person name="Lu Y.-P."/>
            <person name="Flavell R.B."/>
            <person name="Feldmann K.A."/>
        </authorList>
    </citation>
    <scope>NUCLEOTIDE SEQUENCE [LARGE SCALE MRNA]</scope>
</reference>
<reference key="5">
    <citation type="journal article" date="2004" name="J. Biol. Chem.">
        <title>Desulfoglucosinolate sulfotransferases from Arabidopsis thaliana catalyze the final step in the biosynthesis of the glucosinolate core structure.</title>
        <authorList>
            <person name="Piotrowski M."/>
            <person name="Schemenewitz A."/>
            <person name="Lopukhina A."/>
            <person name="Mueller A."/>
            <person name="Janowitz T."/>
            <person name="Weiler E.W."/>
            <person name="Oecking C."/>
        </authorList>
    </citation>
    <scope>FUNCTION</scope>
    <scope>INDUCTION</scope>
</reference>
<reference key="6">
    <citation type="journal article" date="2004" name="J. Exp. Bot.">
        <title>The multi-protein family of Arabidopsis sulphotransferases and their relatives in other plant species.</title>
        <authorList>
            <person name="Klein M."/>
            <person name="Papenbrock J."/>
        </authorList>
    </citation>
    <scope>GENE FAMILY</scope>
    <scope>NOMENCLATURE</scope>
</reference>
<reference key="7">
    <citation type="journal article" date="2005" name="J. Biol. Chem.">
        <title>Elucidation of gene-to-gene and metabolite-to-gene networks in Arabidopsis by integration of metabolomics and transcriptomics.</title>
        <authorList>
            <person name="Hirai M.Y."/>
            <person name="Klein M."/>
            <person name="Fujikawa Y."/>
            <person name="Yano M."/>
            <person name="Goodenowe D.B."/>
            <person name="Yamazaki Y."/>
            <person name="Kanaya S."/>
            <person name="Nakamura Y."/>
            <person name="Kitayama M."/>
            <person name="Suzuki H."/>
            <person name="Sakurai N."/>
            <person name="Shibata D."/>
            <person name="Tokuhisa J."/>
            <person name="Reichelt M."/>
            <person name="Gershenzon J."/>
            <person name="Papenbrock J."/>
            <person name="Saito K."/>
        </authorList>
    </citation>
    <scope>FUNCTION</scope>
    <source>
        <strain>cv. Columbia</strain>
    </source>
</reference>
<reference key="8">
    <citation type="journal article" date="2006" name="FEBS J.">
        <title>The three desulfoglucosinolate sulfotransferase proteins in Arabidopsis have different substrate specificities and are differentially expressed.</title>
        <authorList>
            <person name="Klein M."/>
            <person name="Reichelt M."/>
            <person name="Gershenzon J."/>
            <person name="Papenbrock J."/>
        </authorList>
    </citation>
    <scope>FUNCTION</scope>
    <scope>SUBCELLULAR LOCATION</scope>
    <scope>TISSUE SPECIFICITY</scope>
    <scope>DEVELOPMENTAL STAGE</scope>
    <scope>INDUCTION</scope>
    <scope>BIOPHYSICOCHEMICAL PROPERTIES</scope>
    <scope>VARIANT LEU-324</scope>
    <source>
        <strain>cv. C24</strain>
    </source>
</reference>
<reference key="9">
    <citation type="journal article" date="2009" name="Physiol. Plantarum">
        <title>Kinetics and substrate specificities of desulfo-glucosinolate sulfotransferases in Arabidopsis thaliana.</title>
        <authorList>
            <person name="Klein M."/>
            <person name="Papenbrock J."/>
        </authorList>
    </citation>
    <scope>FUNCTION</scope>
    <scope>CATALYTIC ACTIVITY</scope>
    <scope>BIOPHYSICOCHEMICAL PROPERTIES</scope>
    <source>
        <strain>cv. C24</strain>
    </source>
</reference>
<reference key="10">
    <citation type="journal article" date="2011" name="BMC Biotechnol.">
        <title>Modulation of sulfur metabolism enables efficient glucosinolate engineering.</title>
        <authorList>
            <person name="Moeldrup M.E."/>
            <person name="Geu-Flores F."/>
            <person name="Olsen C.E."/>
            <person name="Halkier B.A."/>
        </authorList>
    </citation>
    <scope>FUNCTION</scope>
</reference>
<organism>
    <name type="scientific">Arabidopsis thaliana</name>
    <name type="common">Mouse-ear cress</name>
    <dbReference type="NCBI Taxonomy" id="3702"/>
    <lineage>
        <taxon>Eukaryota</taxon>
        <taxon>Viridiplantae</taxon>
        <taxon>Streptophyta</taxon>
        <taxon>Embryophyta</taxon>
        <taxon>Tracheophyta</taxon>
        <taxon>Spermatophyta</taxon>
        <taxon>Magnoliopsida</taxon>
        <taxon>eudicotyledons</taxon>
        <taxon>Gunneridae</taxon>
        <taxon>Pentapetalae</taxon>
        <taxon>rosids</taxon>
        <taxon>malvids</taxon>
        <taxon>Brassicales</taxon>
        <taxon>Brassicaceae</taxon>
        <taxon>Camelineae</taxon>
        <taxon>Arabidopsis</taxon>
    </lineage>
</organism>